<sequence length="629" mass="68126">MVALSTLSGLSALPFLFSLVQNVYGVSLEVSTEKGNSSSPILYGFMFEDINHSGDGGIYGQLLRNNGLQGSKPGLTAWAAVGDATIAVDAQNPLTEAIPHSLKLDVKQGASGAVGFTNEGYWGVPVDGSEFLNTFWIKGNFSGDITVRLVGNNTGTEYGSTKISQSSNSSNFTKVLAKIPTKKAPDGAVLYELTVDGASVGGSSLNFGLFELFPQTYKSRSNGLKPQVAQPLADMKGSFLRFPGGNNLEGASEARRWKWNETIGPVENRPGRQGDWSYYNTDGLGLDEYFYWCEDMGLTPVLGVWAGFALESGGNTPITGDALKPYIDDVLNELEYVLGDASTKYGSLRASYGRKEPWKLTMVEIGNEDMLGGGCESYVERFTAFSDAIHAAYPDLTIIASTDQSSCLPSKLPEGAWVDYHNYNTADNLVKQFSQFDNKDRSVPYFIGEYSCQQDNAWPFMQGSVAEAVYMIGIERNSDVVKMAAYAPLLQLVNSTQWTPNLIAFTQNPSTVIETTSYYVQQMFSVNRGDTIHNVTSDSAFGPVYWVASSADDKYYVKLANYGADTQEITVTISGKTGGKLTVLADSDPKAFNSDTQTLVTPSESDMKATNGKFTFTLPAWSVGVLAAH</sequence>
<organism>
    <name type="scientific">Aspergillus oryzae (strain ATCC 42149 / RIB 40)</name>
    <name type="common">Yellow koji mold</name>
    <dbReference type="NCBI Taxonomy" id="510516"/>
    <lineage>
        <taxon>Eukaryota</taxon>
        <taxon>Fungi</taxon>
        <taxon>Dikarya</taxon>
        <taxon>Ascomycota</taxon>
        <taxon>Pezizomycotina</taxon>
        <taxon>Eurotiomycetes</taxon>
        <taxon>Eurotiomycetidae</taxon>
        <taxon>Eurotiales</taxon>
        <taxon>Aspergillaceae</taxon>
        <taxon>Aspergillus</taxon>
        <taxon>Aspergillus subgen. Circumdati</taxon>
    </lineage>
</organism>
<gene>
    <name type="primary">abfA</name>
    <name type="ORF">AO090124000023</name>
</gene>
<evidence type="ECO:0000250" key="1"/>
<evidence type="ECO:0000255" key="2"/>
<evidence type="ECO:0000305" key="3"/>
<comment type="function">
    <text evidence="1">Alpha-L-arabinofuranosidase involved in the degradation of arabinoxylan, a major component of plant hemicellulose. Acts only on small linear 1,5-alpha-linked L-arabinofuranosyl oligosaccharides (By similarity).</text>
</comment>
<comment type="catalytic activity">
    <reaction>
        <text>Hydrolysis of terminal non-reducing alpha-L-arabinofuranoside residues in alpha-L-arabinosides.</text>
        <dbReference type="EC" id="3.2.1.55"/>
    </reaction>
</comment>
<comment type="pathway">
    <text>Glycan metabolism; L-arabinan degradation.</text>
</comment>
<comment type="subcellular location">
    <subcellularLocation>
        <location evidence="1">Secreted</location>
    </subcellularLocation>
</comment>
<comment type="similarity">
    <text evidence="3">Belongs to the glycosyl hydrolase 51 family.</text>
</comment>
<comment type="sequence caution" evidence="3">
    <conflict type="erroneous gene model prediction">
        <sequence resource="EMBL-CDS" id="BAE62575"/>
    </conflict>
</comment>
<proteinExistence type="inferred from homology"/>
<feature type="signal peptide" evidence="2">
    <location>
        <begin position="1"/>
        <end position="25"/>
    </location>
</feature>
<feature type="chain" id="PRO_0000394599" description="Probable alpha-L-arabinofuranosidase A">
    <location>
        <begin position="26"/>
        <end position="629"/>
    </location>
</feature>
<feature type="glycosylation site" description="N-linked (GlcNAc...) asparagine" evidence="2">
    <location>
        <position position="36"/>
    </location>
</feature>
<feature type="glycosylation site" description="N-linked (GlcNAc...) asparagine" evidence="2">
    <location>
        <position position="51"/>
    </location>
</feature>
<feature type="glycosylation site" description="N-linked (GlcNAc...) asparagine" evidence="2">
    <location>
        <position position="140"/>
    </location>
</feature>
<feature type="glycosylation site" description="N-linked (GlcNAc...) asparagine" evidence="2">
    <location>
        <position position="152"/>
    </location>
</feature>
<feature type="glycosylation site" description="N-linked (GlcNAc...) asparagine" evidence="2">
    <location>
        <position position="168"/>
    </location>
</feature>
<feature type="glycosylation site" description="N-linked (GlcNAc...) asparagine" evidence="2">
    <location>
        <position position="171"/>
    </location>
</feature>
<feature type="glycosylation site" description="N-linked (GlcNAc...) asparagine" evidence="2">
    <location>
        <position position="260"/>
    </location>
</feature>
<feature type="glycosylation site" description="N-linked (GlcNAc...) asparagine" evidence="2">
    <location>
        <position position="494"/>
    </location>
</feature>
<feature type="glycosylation site" description="N-linked (GlcNAc...) asparagine" evidence="2">
    <location>
        <position position="534"/>
    </location>
</feature>
<accession>Q2U790</accession>
<keyword id="KW-0119">Carbohydrate metabolism</keyword>
<keyword id="KW-0325">Glycoprotein</keyword>
<keyword id="KW-0326">Glycosidase</keyword>
<keyword id="KW-0378">Hydrolase</keyword>
<keyword id="KW-0624">Polysaccharide degradation</keyword>
<keyword id="KW-1185">Reference proteome</keyword>
<keyword id="KW-0964">Secreted</keyword>
<keyword id="KW-0732">Signal</keyword>
<protein>
    <recommendedName>
        <fullName>Probable alpha-L-arabinofuranosidase A</fullName>
        <shortName>ABF A</shortName>
        <shortName>Arabinosidase A</shortName>
        <ecNumber>3.2.1.55</ecNumber>
    </recommendedName>
</protein>
<name>ABFA_ASPOR</name>
<reference key="1">
    <citation type="journal article" date="2005" name="Nature">
        <title>Genome sequencing and analysis of Aspergillus oryzae.</title>
        <authorList>
            <person name="Machida M."/>
            <person name="Asai K."/>
            <person name="Sano M."/>
            <person name="Tanaka T."/>
            <person name="Kumagai T."/>
            <person name="Terai G."/>
            <person name="Kusumoto K."/>
            <person name="Arima T."/>
            <person name="Akita O."/>
            <person name="Kashiwagi Y."/>
            <person name="Abe K."/>
            <person name="Gomi K."/>
            <person name="Horiuchi H."/>
            <person name="Kitamoto K."/>
            <person name="Kobayashi T."/>
            <person name="Takeuchi M."/>
            <person name="Denning D.W."/>
            <person name="Galagan J.E."/>
            <person name="Nierman W.C."/>
            <person name="Yu J."/>
            <person name="Archer D.B."/>
            <person name="Bennett J.W."/>
            <person name="Bhatnagar D."/>
            <person name="Cleveland T.E."/>
            <person name="Fedorova N.D."/>
            <person name="Gotoh O."/>
            <person name="Horikawa H."/>
            <person name="Hosoyama A."/>
            <person name="Ichinomiya M."/>
            <person name="Igarashi R."/>
            <person name="Iwashita K."/>
            <person name="Juvvadi P.R."/>
            <person name="Kato M."/>
            <person name="Kato Y."/>
            <person name="Kin T."/>
            <person name="Kokubun A."/>
            <person name="Maeda H."/>
            <person name="Maeyama N."/>
            <person name="Maruyama J."/>
            <person name="Nagasaki H."/>
            <person name="Nakajima T."/>
            <person name="Oda K."/>
            <person name="Okada K."/>
            <person name="Paulsen I."/>
            <person name="Sakamoto K."/>
            <person name="Sawano T."/>
            <person name="Takahashi M."/>
            <person name="Takase K."/>
            <person name="Terabayashi Y."/>
            <person name="Wortman J.R."/>
            <person name="Yamada O."/>
            <person name="Yamagata Y."/>
            <person name="Anazawa H."/>
            <person name="Hata Y."/>
            <person name="Koide Y."/>
            <person name="Komori T."/>
            <person name="Koyama Y."/>
            <person name="Minetoki T."/>
            <person name="Suharnan S."/>
            <person name="Tanaka A."/>
            <person name="Isono K."/>
            <person name="Kuhara S."/>
            <person name="Ogasawara N."/>
            <person name="Kikuchi H."/>
        </authorList>
    </citation>
    <scope>NUCLEOTIDE SEQUENCE [LARGE SCALE GENOMIC DNA]</scope>
    <source>
        <strain>ATCC 42149 / RIB 40</strain>
    </source>
</reference>
<dbReference type="EC" id="3.2.1.55"/>
<dbReference type="EMBL" id="BA000053">
    <property type="protein sequence ID" value="BAE62575.1"/>
    <property type="status" value="ALT_SEQ"/>
    <property type="molecule type" value="Genomic_DNA"/>
</dbReference>
<dbReference type="RefSeq" id="XP_001823708.2">
    <property type="nucleotide sequence ID" value="XM_001823656.2"/>
</dbReference>
<dbReference type="SMR" id="Q2U790"/>
<dbReference type="STRING" id="510516.Q2U790"/>
<dbReference type="CAZy" id="GH51">
    <property type="family name" value="Glycoside Hydrolase Family 51"/>
</dbReference>
<dbReference type="GlyCosmos" id="Q2U790">
    <property type="glycosylation" value="9 sites, No reported glycans"/>
</dbReference>
<dbReference type="UniPathway" id="UPA00667"/>
<dbReference type="Proteomes" id="UP000006564">
    <property type="component" value="Chromosome 5"/>
</dbReference>
<dbReference type="GO" id="GO:0005576">
    <property type="term" value="C:extracellular region"/>
    <property type="evidence" value="ECO:0000250"/>
    <property type="project" value="UniProtKB"/>
</dbReference>
<dbReference type="GO" id="GO:0046556">
    <property type="term" value="F:alpha-L-arabinofuranosidase activity"/>
    <property type="evidence" value="ECO:0000250"/>
    <property type="project" value="UniProtKB"/>
</dbReference>
<dbReference type="GO" id="GO:0031222">
    <property type="term" value="P:arabinan catabolic process"/>
    <property type="evidence" value="ECO:0007669"/>
    <property type="project" value="UniProtKB-UniPathway"/>
</dbReference>
<dbReference type="GO" id="GO:0019566">
    <property type="term" value="P:arabinose metabolic process"/>
    <property type="evidence" value="ECO:0000250"/>
    <property type="project" value="UniProtKB"/>
</dbReference>
<dbReference type="GO" id="GO:0046373">
    <property type="term" value="P:L-arabinose metabolic process"/>
    <property type="evidence" value="ECO:0007669"/>
    <property type="project" value="InterPro"/>
</dbReference>
<dbReference type="FunFam" id="2.60.40.1180:FF:000036">
    <property type="entry name" value="Probable alpha-L-arabinofuranosidase A"/>
    <property type="match status" value="1"/>
</dbReference>
<dbReference type="FunFam" id="3.20.20.80:FF:000092">
    <property type="entry name" value="Probable alpha-L-arabinofuranosidase A"/>
    <property type="match status" value="1"/>
</dbReference>
<dbReference type="Gene3D" id="3.20.20.80">
    <property type="entry name" value="Glycosidases"/>
    <property type="match status" value="1"/>
</dbReference>
<dbReference type="Gene3D" id="2.60.40.1180">
    <property type="entry name" value="Golgi alpha-mannosidase II"/>
    <property type="match status" value="1"/>
</dbReference>
<dbReference type="InterPro" id="IPR010720">
    <property type="entry name" value="Alpha-L-AF_C"/>
</dbReference>
<dbReference type="InterPro" id="IPR055235">
    <property type="entry name" value="ASD1_cat"/>
</dbReference>
<dbReference type="InterPro" id="IPR013780">
    <property type="entry name" value="Glyco_hydro_b"/>
</dbReference>
<dbReference type="InterPro" id="IPR017853">
    <property type="entry name" value="Glycoside_hydrolase_SF"/>
</dbReference>
<dbReference type="InterPro" id="IPR051563">
    <property type="entry name" value="Glycosyl_Hydrolase_51"/>
</dbReference>
<dbReference type="PANTHER" id="PTHR31776">
    <property type="entry name" value="ALPHA-L-ARABINOFURANOSIDASE 1"/>
    <property type="match status" value="1"/>
</dbReference>
<dbReference type="PANTHER" id="PTHR31776:SF0">
    <property type="entry name" value="ALPHA-L-ARABINOFURANOSIDASE 1"/>
    <property type="match status" value="1"/>
</dbReference>
<dbReference type="Pfam" id="PF06964">
    <property type="entry name" value="Alpha-L-AF_C"/>
    <property type="match status" value="1"/>
</dbReference>
<dbReference type="Pfam" id="PF22848">
    <property type="entry name" value="ASD1_dom"/>
    <property type="match status" value="1"/>
</dbReference>
<dbReference type="SMART" id="SM00813">
    <property type="entry name" value="Alpha-L-AF_C"/>
    <property type="match status" value="1"/>
</dbReference>
<dbReference type="SUPFAM" id="SSF51445">
    <property type="entry name" value="(Trans)glycosidases"/>
    <property type="match status" value="1"/>
</dbReference>
<dbReference type="SUPFAM" id="SSF51011">
    <property type="entry name" value="Glycosyl hydrolase domain"/>
    <property type="match status" value="1"/>
</dbReference>